<evidence type="ECO:0000250" key="1"/>
<evidence type="ECO:0000255" key="2"/>
<evidence type="ECO:0000305" key="3"/>
<comment type="function">
    <text evidence="1">Core subunit of the mitochondrial membrane respiratory chain NADH dehydrogenase (Complex I) that is believed to belong to the minimal assembly required for catalysis. Complex I functions in the transfer of electrons from NADH to the respiratory chain. The immediate electron acceptor for the enzyme is believed to be ubiquinone (By similarity).</text>
</comment>
<comment type="catalytic activity">
    <reaction>
        <text>a ubiquinone + NADH + 5 H(+)(in) = a ubiquinol + NAD(+) + 4 H(+)(out)</text>
        <dbReference type="Rhea" id="RHEA:29091"/>
        <dbReference type="Rhea" id="RHEA-COMP:9565"/>
        <dbReference type="Rhea" id="RHEA-COMP:9566"/>
        <dbReference type="ChEBI" id="CHEBI:15378"/>
        <dbReference type="ChEBI" id="CHEBI:16389"/>
        <dbReference type="ChEBI" id="CHEBI:17976"/>
        <dbReference type="ChEBI" id="CHEBI:57540"/>
        <dbReference type="ChEBI" id="CHEBI:57945"/>
        <dbReference type="EC" id="7.1.1.2"/>
    </reaction>
</comment>
<comment type="subcellular location">
    <subcellularLocation>
        <location>Mitochondrion inner membrane</location>
        <topology>Multi-pass membrane protein</topology>
    </subcellularLocation>
</comment>
<comment type="similarity">
    <text evidence="3">Belongs to the complex I subunit 2 family.</text>
</comment>
<proteinExistence type="inferred from homology"/>
<sequence>MNPMSWLIITTSIALSTTMITSTTHWLMTWACLEINTLSMVPLISKPNHPRATEAATKYYLIQTMASTSMLFAATTNALNTSNWETHLTTEPMATTIITLALMMKMAAAPFHSWLPSVSQGTTTLTTLTILTWQKIAPLTILLTTHNKTNITLILLSAMLSITMGGLGSLNQTQLRKLMAFSSIAHTGWIMATITMAPKISTLTFTIYIMTTIPTFLLINTTMSMTIKDLGTMWTNSPYTMTILSMTILSMGGLPPLSGFMPKWLILNNLISMNMITEATLMAMASLLSLYVYMRLTYMSSMTLSPHTTTMPLKWRTSNKKHPMGTSMLTMMTMLLLPLSPNM</sequence>
<organism>
    <name type="scientific">Lycodon semicarinatus</name>
    <name type="common">Ryukyu odd-tooth snake</name>
    <name type="synonym">Eumesodon semicarinatus</name>
    <dbReference type="NCBI Taxonomy" id="56549"/>
    <lineage>
        <taxon>Eukaryota</taxon>
        <taxon>Metazoa</taxon>
        <taxon>Chordata</taxon>
        <taxon>Craniata</taxon>
        <taxon>Vertebrata</taxon>
        <taxon>Euteleostomi</taxon>
        <taxon>Lepidosauria</taxon>
        <taxon>Squamata</taxon>
        <taxon>Bifurcata</taxon>
        <taxon>Unidentata</taxon>
        <taxon>Episquamata</taxon>
        <taxon>Toxicofera</taxon>
        <taxon>Serpentes</taxon>
        <taxon>Colubroidea</taxon>
        <taxon>Colubridae</taxon>
        <taxon>Colubrinae</taxon>
        <taxon>Lycodon</taxon>
    </lineage>
</organism>
<feature type="chain" id="PRO_0000117579" description="NADH-ubiquinone oxidoreductase chain 2">
    <location>
        <begin position="1"/>
        <end position="343"/>
    </location>
</feature>
<feature type="transmembrane region" description="Helical" evidence="2">
    <location>
        <begin position="1"/>
        <end position="21"/>
    </location>
</feature>
<feature type="transmembrane region" description="Helical" evidence="2">
    <location>
        <begin position="59"/>
        <end position="81"/>
    </location>
</feature>
<feature type="transmembrane region" description="Helical" evidence="2">
    <location>
        <begin position="96"/>
        <end position="116"/>
    </location>
</feature>
<feature type="transmembrane region" description="Helical" evidence="2">
    <location>
        <begin position="150"/>
        <end position="170"/>
    </location>
</feature>
<feature type="transmembrane region" description="Helical" evidence="2">
    <location>
        <begin position="178"/>
        <end position="198"/>
    </location>
</feature>
<feature type="transmembrane region" description="Helical" evidence="2">
    <location>
        <begin position="200"/>
        <end position="220"/>
    </location>
</feature>
<feature type="transmembrane region" description="Helical" evidence="2">
    <location>
        <begin position="241"/>
        <end position="261"/>
    </location>
</feature>
<feature type="transmembrane region" description="Helical" evidence="2">
    <location>
        <begin position="270"/>
        <end position="290"/>
    </location>
</feature>
<accession>O79547</accession>
<name>NU2M_LYCSM</name>
<dbReference type="EC" id="7.1.1.2"/>
<dbReference type="EMBL" id="AB008539">
    <property type="protein sequence ID" value="BAA33023.1"/>
    <property type="molecule type" value="Genomic_DNA"/>
</dbReference>
<dbReference type="PIR" id="T11089">
    <property type="entry name" value="T11089"/>
</dbReference>
<dbReference type="RefSeq" id="NP_008420.1">
    <property type="nucleotide sequence ID" value="NC_001945.1"/>
</dbReference>
<dbReference type="SMR" id="O79547"/>
<dbReference type="GeneID" id="808268"/>
<dbReference type="CTD" id="4536"/>
<dbReference type="GO" id="GO:0005743">
    <property type="term" value="C:mitochondrial inner membrane"/>
    <property type="evidence" value="ECO:0007669"/>
    <property type="project" value="UniProtKB-SubCell"/>
</dbReference>
<dbReference type="GO" id="GO:0008137">
    <property type="term" value="F:NADH dehydrogenase (ubiquinone) activity"/>
    <property type="evidence" value="ECO:0007669"/>
    <property type="project" value="UniProtKB-EC"/>
</dbReference>
<dbReference type="GO" id="GO:0006120">
    <property type="term" value="P:mitochondrial electron transport, NADH to ubiquinone"/>
    <property type="evidence" value="ECO:0007669"/>
    <property type="project" value="InterPro"/>
</dbReference>
<dbReference type="InterPro" id="IPR050175">
    <property type="entry name" value="Complex_I_Subunit_2"/>
</dbReference>
<dbReference type="InterPro" id="IPR010933">
    <property type="entry name" value="NADH_DH_su2_C"/>
</dbReference>
<dbReference type="InterPro" id="IPR003917">
    <property type="entry name" value="NADH_UbQ_OxRdtase_chain2"/>
</dbReference>
<dbReference type="InterPro" id="IPR001750">
    <property type="entry name" value="ND/Mrp_TM"/>
</dbReference>
<dbReference type="PANTHER" id="PTHR46552">
    <property type="entry name" value="NADH-UBIQUINONE OXIDOREDUCTASE CHAIN 2"/>
    <property type="match status" value="1"/>
</dbReference>
<dbReference type="PANTHER" id="PTHR46552:SF1">
    <property type="entry name" value="NADH-UBIQUINONE OXIDOREDUCTASE CHAIN 2"/>
    <property type="match status" value="1"/>
</dbReference>
<dbReference type="Pfam" id="PF06444">
    <property type="entry name" value="NADH_dehy_S2_C"/>
    <property type="match status" value="1"/>
</dbReference>
<dbReference type="Pfam" id="PF00361">
    <property type="entry name" value="Proton_antipo_M"/>
    <property type="match status" value="1"/>
</dbReference>
<dbReference type="PRINTS" id="PR01436">
    <property type="entry name" value="NADHDHGNASE2"/>
</dbReference>
<protein>
    <recommendedName>
        <fullName>NADH-ubiquinone oxidoreductase chain 2</fullName>
        <ecNumber>7.1.1.2</ecNumber>
    </recommendedName>
    <alternativeName>
        <fullName>NADH dehydrogenase subunit 2</fullName>
    </alternativeName>
</protein>
<gene>
    <name type="primary">MT-ND2</name>
    <name type="synonym">MTND2</name>
    <name type="synonym">NADH2</name>
    <name type="synonym">ND2</name>
</gene>
<reference key="1">
    <citation type="journal article" date="1998" name="Genetics">
        <title>The complete nucleotide sequence of a snake (Dinodon semicarinatus) mitochondrial genome with two identical control regions.</title>
        <authorList>
            <person name="Kumazawa Y."/>
            <person name="Ota H."/>
            <person name="Nishida M."/>
            <person name="Ozawa T."/>
        </authorList>
    </citation>
    <scope>NUCLEOTIDE SEQUENCE [GENOMIC DNA]</scope>
    <source>
        <tissue>Liver</tissue>
    </source>
</reference>
<keyword id="KW-0249">Electron transport</keyword>
<keyword id="KW-0472">Membrane</keyword>
<keyword id="KW-0496">Mitochondrion</keyword>
<keyword id="KW-0999">Mitochondrion inner membrane</keyword>
<keyword id="KW-0520">NAD</keyword>
<keyword id="KW-0679">Respiratory chain</keyword>
<keyword id="KW-1278">Translocase</keyword>
<keyword id="KW-0812">Transmembrane</keyword>
<keyword id="KW-1133">Transmembrane helix</keyword>
<keyword id="KW-0813">Transport</keyword>
<keyword id="KW-0830">Ubiquinone</keyword>
<geneLocation type="mitochondrion"/>